<sequence length="383" mass="41286">MKTGLTVLIAGGGIGGLTLGVALRRAGIAFKIFERAPALLRVGAGISMQSNAMLAFRTLGVDTAVAAAGQEIQGGAILNPRGEEISSMPVSKASAEVGAPMITIHRGRLQDVLHQIVGDDNLVLGAKVEGFRDGPDGLFVRLADGREFQGDLLVGADGLRSAVRAQLLKEPSPRYSGYTSWRGVCDVSEGVRRDYTSESWGPGMRFGVVPIGEGQTYWFATATAPEGGVDHPDARTELLQRFSGWHAPIPQLIENTPSSAIMRTDIHDRVPIRQWVQGRAVLLGDAAHPMTPNMGQGGCQAVEDAVVLARCLSLEAELPAALARYQAVRVERANDFVAGSYRIGQIGQWENAFACWVREKLMRMMSSDRVDARTRRNLQFTPL</sequence>
<dbReference type="EC" id="1.14.13.222" evidence="3"/>
<dbReference type="EMBL" id="HE580420">
    <property type="protein sequence ID" value="CCD27744.1"/>
    <property type="molecule type" value="Genomic_DNA"/>
</dbReference>
<dbReference type="SMR" id="H1ZZA4"/>
<dbReference type="KEGG" id="ag:CCD27744"/>
<dbReference type="BioCyc" id="MetaCyc:MONOMER-18340"/>
<dbReference type="BRENDA" id="1.14.13.222">
    <property type="organism ID" value="5908"/>
</dbReference>
<dbReference type="GO" id="GO:0071949">
    <property type="term" value="F:FAD binding"/>
    <property type="evidence" value="ECO:0007669"/>
    <property type="project" value="InterPro"/>
</dbReference>
<dbReference type="GO" id="GO:0004497">
    <property type="term" value="F:monooxygenase activity"/>
    <property type="evidence" value="ECO:0007669"/>
    <property type="project" value="UniProtKB-KW"/>
</dbReference>
<dbReference type="Gene3D" id="3.50.50.60">
    <property type="entry name" value="FAD/NAD(P)-binding domain"/>
    <property type="match status" value="1"/>
</dbReference>
<dbReference type="InterPro" id="IPR002938">
    <property type="entry name" value="FAD-bd"/>
</dbReference>
<dbReference type="InterPro" id="IPR036188">
    <property type="entry name" value="FAD/NAD-bd_sf"/>
</dbReference>
<dbReference type="PANTHER" id="PTHR46496">
    <property type="match status" value="1"/>
</dbReference>
<dbReference type="PANTHER" id="PTHR46496:SF1">
    <property type="entry name" value="ZEAXANTHIN EPOXIDASE, CHLOROPLASTIC"/>
    <property type="match status" value="1"/>
</dbReference>
<dbReference type="Pfam" id="PF01494">
    <property type="entry name" value="FAD_binding_3"/>
    <property type="match status" value="1"/>
</dbReference>
<dbReference type="PRINTS" id="PR00420">
    <property type="entry name" value="RNGMNOXGNASE"/>
</dbReference>
<dbReference type="SUPFAM" id="SSF51905">
    <property type="entry name" value="FAD/NAD(P)-binding domain"/>
    <property type="match status" value="1"/>
</dbReference>
<reference key="1">
    <citation type="journal article" date="2011" name="Mol. Biosyst.">
        <title>Completing the puzzle of aurachin biosynthesis in Stigmatella aurantiaca Sg a15.</title>
        <authorList>
            <person name="Pistorius D."/>
            <person name="Li Y."/>
            <person name="Sandmann A."/>
            <person name="Mueller R."/>
        </authorList>
    </citation>
    <scope>NUCLEOTIDE SEQUENCE [GENOMIC DNA]</scope>
    <scope>DISRUPTION PHENOTYPE</scope>
    <source>
        <strain>Sg a15</strain>
    </source>
</reference>
<reference key="2">
    <citation type="journal article" date="2012" name="Angew. Chem. Int. Ed.">
        <title>A semipinacol rearrangement directed by an enzymatic system featuring dual-function FAD-dependent monooxygenase.</title>
        <authorList>
            <person name="Katsuyama Y."/>
            <person name="Harmrolfs K."/>
            <person name="Pistorius D."/>
            <person name="Li Y."/>
            <person name="Mueller R."/>
        </authorList>
    </citation>
    <scope>FUNCTION</scope>
    <scope>CATALYTIC ACTIVITY</scope>
    <scope>COFACTOR</scope>
    <source>
        <strain>Sg a15</strain>
    </source>
</reference>
<proteinExistence type="evidence at protein level"/>
<accession>H1ZZA4</accession>
<evidence type="ECO:0000250" key="1">
    <source>
        <dbReference type="UniProtKB" id="A6T923"/>
    </source>
</evidence>
<evidence type="ECO:0000269" key="2">
    <source>
    </source>
</evidence>
<evidence type="ECO:0000269" key="3">
    <source>
    </source>
</evidence>
<evidence type="ECO:0000303" key="4">
    <source>
    </source>
</evidence>
<evidence type="ECO:0000305" key="5"/>
<evidence type="ECO:0000305" key="6">
    <source>
    </source>
</evidence>
<feature type="chain" id="PRO_0000441676" description="Aurachin C monooxygenase/isomerase">
    <location>
        <begin position="1"/>
        <end position="383"/>
    </location>
</feature>
<feature type="binding site" evidence="1">
    <location>
        <position position="15"/>
    </location>
    <ligand>
        <name>FAD</name>
        <dbReference type="ChEBI" id="CHEBI:57692"/>
    </ligand>
</feature>
<feature type="binding site" evidence="1">
    <location>
        <position position="47"/>
    </location>
    <ligand>
        <name>FAD</name>
        <dbReference type="ChEBI" id="CHEBI:57692"/>
    </ligand>
</feature>
<feature type="binding site" evidence="1">
    <location>
        <position position="128"/>
    </location>
    <ligand>
        <name>FAD</name>
        <dbReference type="ChEBI" id="CHEBI:57692"/>
    </ligand>
</feature>
<feature type="binding site" evidence="1">
    <location>
        <position position="285"/>
    </location>
    <ligand>
        <name>FAD</name>
        <dbReference type="ChEBI" id="CHEBI:57692"/>
    </ligand>
</feature>
<feature type="binding site" evidence="1">
    <location>
        <begin position="295"/>
        <end position="299"/>
    </location>
    <ligand>
        <name>FAD</name>
        <dbReference type="ChEBI" id="CHEBI:57692"/>
    </ligand>
</feature>
<comment type="function">
    <text evidence="3">Catalyzes the initial step in the conversion of aurachin C to aurachin B. Catalyzes the epoxidation of the C(2)-C(3) double bond of aurachin C, which is followed by a semipinacol rearrangement, causing migration of the farnesyl group from C(3) to C(4). Accepts both NADH and NADPH, but has a preference for NADH.</text>
</comment>
<comment type="catalytic activity">
    <reaction evidence="3">
        <text>aurachin C + NADH + O2 + H(+) = 4-hydroxy-2-methyl-3-oxo-4-[(2E,6E)-farnesyl]-3,4-dihydroquinoline 1-oxide + NAD(+) + H2O</text>
        <dbReference type="Rhea" id="RHEA:49000"/>
        <dbReference type="ChEBI" id="CHEBI:15377"/>
        <dbReference type="ChEBI" id="CHEBI:15378"/>
        <dbReference type="ChEBI" id="CHEBI:15379"/>
        <dbReference type="ChEBI" id="CHEBI:57540"/>
        <dbReference type="ChEBI" id="CHEBI:57945"/>
        <dbReference type="ChEBI" id="CHEBI:90785"/>
        <dbReference type="ChEBI" id="CHEBI:90888"/>
        <dbReference type="EC" id="1.14.13.222"/>
    </reaction>
    <physiologicalReaction direction="left-to-right" evidence="3">
        <dbReference type="Rhea" id="RHEA:49001"/>
    </physiologicalReaction>
</comment>
<comment type="catalytic activity">
    <reaction evidence="3">
        <text>aurachin C + NADPH + O2 + H(+) = 4-hydroxy-2-methyl-3-oxo-4-[(2E,6E)-farnesyl]-3,4-dihydroquinoline 1-oxide + NADP(+) + H2O</text>
        <dbReference type="Rhea" id="RHEA:49004"/>
        <dbReference type="ChEBI" id="CHEBI:15377"/>
        <dbReference type="ChEBI" id="CHEBI:15378"/>
        <dbReference type="ChEBI" id="CHEBI:15379"/>
        <dbReference type="ChEBI" id="CHEBI:57783"/>
        <dbReference type="ChEBI" id="CHEBI:58349"/>
        <dbReference type="ChEBI" id="CHEBI:90785"/>
        <dbReference type="ChEBI" id="CHEBI:90888"/>
        <dbReference type="EC" id="1.14.13.222"/>
    </reaction>
    <physiologicalReaction direction="left-to-right" evidence="3">
        <dbReference type="Rhea" id="RHEA:49005"/>
    </physiologicalReaction>
</comment>
<comment type="catalytic activity">
    <reaction evidence="6">
        <text>aurachin C + NADH + O2 + H(+) = aurachin C epoxide + NAD(+) + H2O</text>
        <dbReference type="Rhea" id="RHEA:49012"/>
        <dbReference type="ChEBI" id="CHEBI:15377"/>
        <dbReference type="ChEBI" id="CHEBI:15378"/>
        <dbReference type="ChEBI" id="CHEBI:15379"/>
        <dbReference type="ChEBI" id="CHEBI:57540"/>
        <dbReference type="ChEBI" id="CHEBI:57945"/>
        <dbReference type="ChEBI" id="CHEBI:90888"/>
        <dbReference type="ChEBI" id="CHEBI:90889"/>
    </reaction>
    <physiologicalReaction direction="left-to-right" evidence="6">
        <dbReference type="Rhea" id="RHEA:49013"/>
    </physiologicalReaction>
</comment>
<comment type="catalytic activity">
    <reaction evidence="6">
        <text>aurachin C + NADPH + O2 + H(+) = aurachin C epoxide + NADP(+) + H2O</text>
        <dbReference type="Rhea" id="RHEA:49008"/>
        <dbReference type="ChEBI" id="CHEBI:15377"/>
        <dbReference type="ChEBI" id="CHEBI:15378"/>
        <dbReference type="ChEBI" id="CHEBI:15379"/>
        <dbReference type="ChEBI" id="CHEBI:57783"/>
        <dbReference type="ChEBI" id="CHEBI:58349"/>
        <dbReference type="ChEBI" id="CHEBI:90888"/>
        <dbReference type="ChEBI" id="CHEBI:90889"/>
    </reaction>
    <physiologicalReaction direction="left-to-right" evidence="6">
        <dbReference type="Rhea" id="RHEA:49009"/>
    </physiologicalReaction>
</comment>
<comment type="catalytic activity">
    <reaction evidence="6">
        <text>aurachin C epoxide = 2-hydroxy-1a-methyl-7a-[(2E,6E)-farnesyl]-1a,2-dihydrooxireno[2,3-b]quinolin-7(7aH)-one</text>
        <dbReference type="Rhea" id="RHEA:49016"/>
        <dbReference type="ChEBI" id="CHEBI:90889"/>
        <dbReference type="ChEBI" id="CHEBI:90890"/>
    </reaction>
    <physiologicalReaction direction="left-to-right" evidence="6">
        <dbReference type="Rhea" id="RHEA:49017"/>
    </physiologicalReaction>
</comment>
<comment type="catalytic activity">
    <reaction evidence="6">
        <text>2-hydroxy-1a-methyl-7a-[(2E,6E)-farnesyl]-1a,2-dihydrooxireno[2,3-b]quinolin-7(7aH)-one = 4-hydroxy-2-methyl-3-oxo-4-[(2E,6E)-farnesyl]-3,4-dihydroquinoline 1-oxide</text>
        <dbReference type="Rhea" id="RHEA:49020"/>
        <dbReference type="ChEBI" id="CHEBI:90785"/>
        <dbReference type="ChEBI" id="CHEBI:90890"/>
    </reaction>
    <physiologicalReaction direction="left-to-right" evidence="6">
        <dbReference type="Rhea" id="RHEA:49021"/>
    </physiologicalReaction>
</comment>
<comment type="cofactor">
    <cofactor evidence="3">
        <name>FAD</name>
        <dbReference type="ChEBI" id="CHEBI:57692"/>
    </cofactor>
</comment>
<comment type="disruption phenotype">
    <text evidence="2">Mutant accumulates aurachin D and aurachin C and does not produce aurachin B and aurachin A.</text>
</comment>
<organism>
    <name type="scientific">Stigmatella aurantiaca</name>
    <dbReference type="NCBI Taxonomy" id="41"/>
    <lineage>
        <taxon>Bacteria</taxon>
        <taxon>Pseudomonadati</taxon>
        <taxon>Myxococcota</taxon>
        <taxon>Myxococcia</taxon>
        <taxon>Myxococcales</taxon>
        <taxon>Cystobacterineae</taxon>
        <taxon>Archangiaceae</taxon>
        <taxon>Stigmatella</taxon>
    </lineage>
</organism>
<protein>
    <recommendedName>
        <fullName evidence="5">Aurachin C monooxygenase/isomerase</fullName>
        <ecNumber evidence="3">1.14.13.222</ecNumber>
    </recommendedName>
</protein>
<gene>
    <name evidence="4" type="primary">auaG</name>
</gene>
<name>AUAG_STIAU</name>
<keyword id="KW-0274">FAD</keyword>
<keyword id="KW-0285">Flavoprotein</keyword>
<keyword id="KW-0503">Monooxygenase</keyword>
<keyword id="KW-0520">NAD</keyword>
<keyword id="KW-0521">NADP</keyword>
<keyword id="KW-0560">Oxidoreductase</keyword>